<dbReference type="EMBL" id="AB037969">
    <property type="protein sequence ID" value="BAA90701.1"/>
    <property type="molecule type" value="Genomic_DNA"/>
</dbReference>
<dbReference type="EMBL" id="BC017646">
    <property type="protein sequence ID" value="AAH17646.1"/>
    <property type="molecule type" value="mRNA"/>
</dbReference>
<dbReference type="EMBL" id="U34818">
    <property type="protein sequence ID" value="AAA84429.1"/>
    <property type="molecule type" value="Genomic_DNA"/>
</dbReference>
<dbReference type="EMBL" id="X73985">
    <property type="protein sequence ID" value="CAA52163.1"/>
    <property type="molecule type" value="mRNA"/>
</dbReference>
<dbReference type="CCDS" id="CCDS22661.1"/>
<dbReference type="PIR" id="S41476">
    <property type="entry name" value="S41476"/>
</dbReference>
<dbReference type="RefSeq" id="NP_031612.1">
    <property type="nucleotide sequence ID" value="NM_007586.2"/>
</dbReference>
<dbReference type="SMR" id="Q08331"/>
<dbReference type="BioGRID" id="198450">
    <property type="interactions" value="6"/>
</dbReference>
<dbReference type="FunCoup" id="Q08331">
    <property type="interactions" value="227"/>
</dbReference>
<dbReference type="IntAct" id="Q08331">
    <property type="interactions" value="1"/>
</dbReference>
<dbReference type="STRING" id="10090.ENSMUSP00000003754"/>
<dbReference type="iPTMnet" id="Q08331"/>
<dbReference type="PhosphoSitePlus" id="Q08331"/>
<dbReference type="SwissPalm" id="Q08331"/>
<dbReference type="jPOST" id="Q08331"/>
<dbReference type="PaxDb" id="10090-ENSMUSP00000003754"/>
<dbReference type="PeptideAtlas" id="Q08331"/>
<dbReference type="ProteomicsDB" id="281759"/>
<dbReference type="ABCD" id="Q08331">
    <property type="antibodies" value="2 sequenced antibodies"/>
</dbReference>
<dbReference type="Antibodypedia" id="1545">
    <property type="antibodies" value="771 antibodies from 48 providers"/>
</dbReference>
<dbReference type="DNASU" id="12308"/>
<dbReference type="Ensembl" id="ENSMUST00000003754.8">
    <property type="protein sequence ID" value="ENSMUSP00000003754.7"/>
    <property type="gene ID" value="ENSMUSG00000003657.10"/>
</dbReference>
<dbReference type="GeneID" id="12308"/>
<dbReference type="KEGG" id="mmu:12308"/>
<dbReference type="UCSC" id="uc009nko.1">
    <property type="organism name" value="mouse"/>
</dbReference>
<dbReference type="AGR" id="MGI:101914"/>
<dbReference type="CTD" id="794"/>
<dbReference type="MGI" id="MGI:101914">
    <property type="gene designation" value="Calb2"/>
</dbReference>
<dbReference type="VEuPathDB" id="HostDB:ENSMUSG00000003657"/>
<dbReference type="eggNOG" id="KOG0027">
    <property type="taxonomic scope" value="Eukaryota"/>
</dbReference>
<dbReference type="GeneTree" id="ENSGT00950000183108"/>
<dbReference type="HOGENOM" id="CLU_054826_1_1_1"/>
<dbReference type="InParanoid" id="Q08331"/>
<dbReference type="OMA" id="IVLCNEP"/>
<dbReference type="OrthoDB" id="428774at2759"/>
<dbReference type="PhylomeDB" id="Q08331"/>
<dbReference type="TreeFam" id="TF325083"/>
<dbReference type="BioGRID-ORCS" id="12308">
    <property type="hits" value="0 hits in 76 CRISPR screens"/>
</dbReference>
<dbReference type="ChiTaRS" id="Calb2">
    <property type="organism name" value="mouse"/>
</dbReference>
<dbReference type="PRO" id="PR:Q08331"/>
<dbReference type="Proteomes" id="UP000000589">
    <property type="component" value="Chromosome 8"/>
</dbReference>
<dbReference type="RNAct" id="Q08331">
    <property type="molecule type" value="protein"/>
</dbReference>
<dbReference type="Bgee" id="ENSMUSG00000003657">
    <property type="expression patterns" value="Expressed in habenula and 111 other cell types or tissues"/>
</dbReference>
<dbReference type="ExpressionAtlas" id="Q08331">
    <property type="expression patterns" value="baseline and differential"/>
</dbReference>
<dbReference type="GO" id="GO:0005829">
    <property type="term" value="C:cytosol"/>
    <property type="evidence" value="ECO:0007669"/>
    <property type="project" value="Ensembl"/>
</dbReference>
<dbReference type="GO" id="GO:0044293">
    <property type="term" value="C:dendriole"/>
    <property type="evidence" value="ECO:0000314"/>
    <property type="project" value="MGI"/>
</dbReference>
<dbReference type="GO" id="GO:0005921">
    <property type="term" value="C:gap junction"/>
    <property type="evidence" value="ECO:0000314"/>
    <property type="project" value="MGI"/>
</dbReference>
<dbReference type="GO" id="GO:0098688">
    <property type="term" value="C:parallel fiber to Purkinje cell synapse"/>
    <property type="evidence" value="ECO:0000314"/>
    <property type="project" value="UniProtKB"/>
</dbReference>
<dbReference type="GO" id="GO:0098793">
    <property type="term" value="C:presynapse"/>
    <property type="evidence" value="ECO:0007669"/>
    <property type="project" value="GOC"/>
</dbReference>
<dbReference type="GO" id="GO:0099534">
    <property type="term" value="F:calcium ion binding involved in regulation of presynaptic cytosolic calcium ion concentration"/>
    <property type="evidence" value="ECO:0000314"/>
    <property type="project" value="UniProtKB"/>
</dbReference>
<dbReference type="GO" id="GO:0006874">
    <property type="term" value="P:intracellular calcium ion homeostasis"/>
    <property type="evidence" value="ECO:0000314"/>
    <property type="project" value="UniProtKB"/>
</dbReference>
<dbReference type="GO" id="GO:0048167">
    <property type="term" value="P:regulation of synaptic plasticity"/>
    <property type="evidence" value="ECO:0000314"/>
    <property type="project" value="UniProtKB"/>
</dbReference>
<dbReference type="GO" id="GO:0099536">
    <property type="term" value="P:synaptic signaling"/>
    <property type="evidence" value="ECO:0000314"/>
    <property type="project" value="UniProtKB"/>
</dbReference>
<dbReference type="CDD" id="cd16177">
    <property type="entry name" value="EFh_HEF_CR"/>
    <property type="match status" value="1"/>
</dbReference>
<dbReference type="FunFam" id="1.10.238.10:FF:000054">
    <property type="entry name" value="Calbindin 2"/>
    <property type="match status" value="1"/>
</dbReference>
<dbReference type="FunFam" id="1.10.238.10:FF:000165">
    <property type="entry name" value="Calbindin 2"/>
    <property type="match status" value="1"/>
</dbReference>
<dbReference type="FunFam" id="1.10.238.10:FF:000116">
    <property type="entry name" value="calretinin isoform X2"/>
    <property type="match status" value="1"/>
</dbReference>
<dbReference type="Gene3D" id="1.10.238.10">
    <property type="entry name" value="EF-hand"/>
    <property type="match status" value="3"/>
</dbReference>
<dbReference type="InterPro" id="IPR029646">
    <property type="entry name" value="CALB2"/>
</dbReference>
<dbReference type="InterPro" id="IPR051001">
    <property type="entry name" value="Calbindin_Ca-bind"/>
</dbReference>
<dbReference type="InterPro" id="IPR011992">
    <property type="entry name" value="EF-hand-dom_pair"/>
</dbReference>
<dbReference type="InterPro" id="IPR018247">
    <property type="entry name" value="EF_Hand_1_Ca_BS"/>
</dbReference>
<dbReference type="InterPro" id="IPR002048">
    <property type="entry name" value="EF_hand_dom"/>
</dbReference>
<dbReference type="PANTHER" id="PTHR19972">
    <property type="entry name" value="CALBINDIN"/>
    <property type="match status" value="1"/>
</dbReference>
<dbReference type="PANTHER" id="PTHR19972:SF4">
    <property type="entry name" value="CALRETININ"/>
    <property type="match status" value="1"/>
</dbReference>
<dbReference type="Pfam" id="PF00036">
    <property type="entry name" value="EF-hand_1"/>
    <property type="match status" value="1"/>
</dbReference>
<dbReference type="Pfam" id="PF13499">
    <property type="entry name" value="EF-hand_7"/>
    <property type="match status" value="2"/>
</dbReference>
<dbReference type="SMART" id="SM00054">
    <property type="entry name" value="EFh"/>
    <property type="match status" value="5"/>
</dbReference>
<dbReference type="SUPFAM" id="SSF47473">
    <property type="entry name" value="EF-hand"/>
    <property type="match status" value="2"/>
</dbReference>
<dbReference type="PROSITE" id="PS00018">
    <property type="entry name" value="EF_HAND_1"/>
    <property type="match status" value="5"/>
</dbReference>
<dbReference type="PROSITE" id="PS50222">
    <property type="entry name" value="EF_HAND_2"/>
    <property type="match status" value="5"/>
</dbReference>
<reference key="1">
    <citation type="submission" date="2000-02" db="EMBL/GenBank/DDBJ databases">
        <authorList>
            <person name="Tanaka Y."/>
            <person name="Taki K."/>
            <person name="Eguchi N."/>
            <person name="Kaneko T."/>
        </authorList>
    </citation>
    <scope>NUCLEOTIDE SEQUENCE</scope>
</reference>
<reference key="2">
    <citation type="journal article" date="2004" name="Genome Res.">
        <title>The status, quality, and expansion of the NIH full-length cDNA project: the Mammalian Gene Collection (MGC).</title>
        <authorList>
            <consortium name="The MGC Project Team"/>
        </authorList>
    </citation>
    <scope>NUCLEOTIDE SEQUENCE [LARGE SCALE MRNA]</scope>
    <source>
        <tissue>Eye</tissue>
    </source>
</reference>
<reference key="3">
    <citation type="journal article" date="1997" name="Brain Res. Mol. Brain Res.">
        <title>The mouse calretinin gene promoter region: structural and functional components.</title>
        <authorList>
            <person name="Strauss K.I."/>
            <person name="Kuznicki J."/>
            <person name="Winsky L."/>
            <person name="Kawagoe J.I."/>
            <person name="Hammer M."/>
            <person name="Jacobowitz D.M."/>
        </authorList>
    </citation>
    <scope>NUCLEOTIDE SEQUENCE OF 1-31</scope>
    <source>
        <strain>129/Sv</strain>
    </source>
</reference>
<reference key="4">
    <citation type="submission" date="2009-01" db="UniProtKB">
        <authorList>
            <person name="Lubec G."/>
            <person name="Klug S."/>
            <person name="Sunyer B."/>
            <person name="Chen W.-Q."/>
        </authorList>
    </citation>
    <scope>PROTEIN SEQUENCE OF 27-50; 124-133; 179-189 AND 234-244</scope>
    <scope>IDENTIFICATION BY MASS SPECTROMETRY</scope>
    <source>
        <strain>OF1</strain>
        <tissue>Hippocampus</tissue>
    </source>
</reference>
<reference key="5">
    <citation type="journal article" date="1993" name="Nucleic Acids Res.">
        <title>Design and specificity of hammerhead ribozymes against calretinin mRNA.</title>
        <authorList>
            <person name="Ellis J."/>
            <person name="Rogers J."/>
        </authorList>
    </citation>
    <scope>NUCLEOTIDE SEQUENCE [MRNA] OF 82-271</scope>
</reference>
<reference key="6">
    <citation type="journal article" date="1999" name="Proc. Natl. Acad. Sci. U.S.A.">
        <title>Impaired motor coordination and Purkinje cell excitability in mice lacking calretinin.</title>
        <authorList>
            <person name="Schiffmann S.N."/>
            <person name="Cheron G."/>
            <person name="Lohof A."/>
            <person name="d'Alcantara P."/>
            <person name="Meyer M."/>
            <person name="Parmentier M."/>
            <person name="Schurmans S."/>
        </authorList>
    </citation>
    <scope>FUNCTION</scope>
    <scope>SUBCELLULAR LOCATION</scope>
    <scope>TISSUE SPECIFICITY</scope>
    <scope>DISRUPTION PHENOTYPE</scope>
</reference>
<reference key="7">
    <citation type="journal article" date="2010" name="Cell">
        <title>A tissue-specific atlas of mouse protein phosphorylation and expression.</title>
        <authorList>
            <person name="Huttlin E.L."/>
            <person name="Jedrychowski M.P."/>
            <person name="Elias J.E."/>
            <person name="Goswami T."/>
            <person name="Rad R."/>
            <person name="Beausoleil S.A."/>
            <person name="Villen J."/>
            <person name="Haas W."/>
            <person name="Sowa M.E."/>
            <person name="Gygi S.P."/>
        </authorList>
    </citation>
    <scope>IDENTIFICATION BY MASS SPECTROMETRY [LARGE SCALE ANALYSIS]</scope>
    <source>
        <tissue>Brain</tissue>
    </source>
</reference>
<reference key="8">
    <citation type="journal article" date="2020" name="Front. Neurosci.">
        <title>Unipolar (Dendritic) Brush Cells Are Morphologically Complex and Require Tbr2 for Differentiation and Migration.</title>
        <authorList>
            <person name="McDonough A."/>
            <person name="Elsen G.E."/>
            <person name="Daza R.M."/>
            <person name="Bachleda A.R."/>
            <person name="Pizzo D."/>
            <person name="DelleTorri O.M."/>
            <person name="Hevner R.F."/>
        </authorList>
    </citation>
    <scope>SUBCELLULAR LOCATION</scope>
    <scope>TISSUE SPECIFICITY</scope>
</reference>
<reference key="9">
    <citation type="journal article" date="2022" name="J. Neurosci.">
        <title>Calretinin-Expressing Synapses Show Improved Synaptic Efficacy with Reduced Asynchronous Release during High-Rate Activity.</title>
        <authorList>
            <person name="Zhang C."/>
            <person name="Wang M."/>
            <person name="Lin S."/>
            <person name="Xie R."/>
        </authorList>
    </citation>
    <scope>FUNCTION</scope>
    <scope>SUBCELLULAR LOCATION</scope>
    <scope>TISSUE SPECIFICITY</scope>
</reference>
<keyword id="KW-0106">Calcium</keyword>
<keyword id="KW-0966">Cell projection</keyword>
<keyword id="KW-0903">Direct protein sequencing</keyword>
<keyword id="KW-0479">Metal-binding</keyword>
<keyword id="KW-0597">Phosphoprotein</keyword>
<keyword id="KW-1185">Reference proteome</keyword>
<keyword id="KW-0677">Repeat</keyword>
<keyword id="KW-0770">Synapse</keyword>
<gene>
    <name type="primary">Calb2</name>
</gene>
<protein>
    <recommendedName>
        <fullName>Calretinin</fullName>
        <shortName>CR</shortName>
    </recommendedName>
</protein>
<comment type="function">
    <text evidence="1 3 5">Calcium-binding protein involved in calcium homeostasis and signal transduction. It plays a critical role in buffering intracellular calcium levels and modulating calcium-dependent signaling pathways. Predominantly expressed in specific neuronal populations, influences synaptic plasticity and neuronal excitability, contributing to learning and memory (PubMed:10220453, PubMed:35165172). During embryonic development, it facilitates neuronal differentiation and maturation (By similarity).</text>
</comment>
<comment type="subcellular location">
    <subcellularLocation>
        <location evidence="5">Synapse</location>
    </subcellularLocation>
    <subcellularLocation>
        <location evidence="4">Cell projection</location>
        <location evidence="4">Dendrite</location>
    </subcellularLocation>
    <text evidence="4">Located in dendrioles, small dendrites that makes up a brush structure found as the terminal specialization of a dendrite of a unipolar brush cell.</text>
</comment>
<comment type="tissue specificity">
    <text evidence="3 4 5">Widely expressed in central nervous system (PubMed:10220453, PubMed:35165172). Expressed in type I unipolar brush cells of the cerebellum (at protein level) (PubMed:33488348).</text>
</comment>
<comment type="disruption phenotype">
    <text evidence="3">Mutants show motor coordination deficits.</text>
</comment>
<comment type="similarity">
    <text evidence="6">Belongs to the calbindin family.</text>
</comment>
<accession>Q08331</accession>
<accession>Q60964</accession>
<accession>Q9JM81</accession>
<organism>
    <name type="scientific">Mus musculus</name>
    <name type="common">Mouse</name>
    <dbReference type="NCBI Taxonomy" id="10090"/>
    <lineage>
        <taxon>Eukaryota</taxon>
        <taxon>Metazoa</taxon>
        <taxon>Chordata</taxon>
        <taxon>Craniata</taxon>
        <taxon>Vertebrata</taxon>
        <taxon>Euteleostomi</taxon>
        <taxon>Mammalia</taxon>
        <taxon>Eutheria</taxon>
        <taxon>Euarchontoglires</taxon>
        <taxon>Glires</taxon>
        <taxon>Rodentia</taxon>
        <taxon>Myomorpha</taxon>
        <taxon>Muroidea</taxon>
        <taxon>Muridae</taxon>
        <taxon>Murinae</taxon>
        <taxon>Mus</taxon>
        <taxon>Mus</taxon>
    </lineage>
</organism>
<evidence type="ECO:0000250" key="1">
    <source>
        <dbReference type="UniProtKB" id="P47728"/>
    </source>
</evidence>
<evidence type="ECO:0000255" key="2">
    <source>
        <dbReference type="PROSITE-ProRule" id="PRU00448"/>
    </source>
</evidence>
<evidence type="ECO:0000269" key="3">
    <source>
    </source>
</evidence>
<evidence type="ECO:0000269" key="4">
    <source>
    </source>
</evidence>
<evidence type="ECO:0000269" key="5">
    <source>
    </source>
</evidence>
<evidence type="ECO:0000305" key="6"/>
<sequence length="271" mass="31373">MAGPQQQPPYLHLAELTASQFLEIWKHFDADGNGYIEGKELENFFQELEKARKGSGMMSKSDNFGEKMKEFMQKYDKNSDGKIEMAELAQILPTEENFLLCFRQHVGSSAEFMEAWRKYDTDRSGYIEANELKGFLSDLLKKANRPYDEPKLQEYTQTILRMFDLNGDGKLGLSEMSRLLPVQENFLLKFQGMKLTSEEFNAIFTFYDKDGSGYIDENELDALLKDLYEKNKKEMNIQQLTTYRKSVMSLAEAGKLYRKDLEIVLCSEPPV</sequence>
<name>CALB2_MOUSE</name>
<proteinExistence type="evidence at protein level"/>
<feature type="chain" id="PRO_0000073480" description="Calretinin">
    <location>
        <begin position="1"/>
        <end position="271"/>
    </location>
</feature>
<feature type="domain" description="EF-hand 1" evidence="2">
    <location>
        <begin position="16"/>
        <end position="51"/>
    </location>
</feature>
<feature type="domain" description="EF-hand 2" evidence="2">
    <location>
        <begin position="63"/>
        <end position="98"/>
    </location>
</feature>
<feature type="domain" description="EF-hand 3" evidence="2">
    <location>
        <begin position="107"/>
        <end position="142"/>
    </location>
</feature>
<feature type="domain" description="EF-hand 4" evidence="2">
    <location>
        <begin position="151"/>
        <end position="186"/>
    </location>
</feature>
<feature type="domain" description="EF-hand 5" evidence="2">
    <location>
        <begin position="195"/>
        <end position="230"/>
    </location>
</feature>
<feature type="domain" description="EF-hand 6" evidence="6">
    <location>
        <begin position="235"/>
        <end position="270"/>
    </location>
</feature>
<feature type="binding site" evidence="2">
    <location>
        <position position="29"/>
    </location>
    <ligand>
        <name>Ca(2+)</name>
        <dbReference type="ChEBI" id="CHEBI:29108"/>
        <label>1</label>
    </ligand>
</feature>
<feature type="binding site" evidence="2">
    <location>
        <position position="31"/>
    </location>
    <ligand>
        <name>Ca(2+)</name>
        <dbReference type="ChEBI" id="CHEBI:29108"/>
        <label>1</label>
    </ligand>
</feature>
<feature type="binding site" evidence="2">
    <location>
        <position position="33"/>
    </location>
    <ligand>
        <name>Ca(2+)</name>
        <dbReference type="ChEBI" id="CHEBI:29108"/>
        <label>1</label>
    </ligand>
</feature>
<feature type="binding site" evidence="2">
    <location>
        <position position="35"/>
    </location>
    <ligand>
        <name>Ca(2+)</name>
        <dbReference type="ChEBI" id="CHEBI:29108"/>
        <label>1</label>
    </ligand>
</feature>
<feature type="binding site" evidence="2">
    <location>
        <position position="40"/>
    </location>
    <ligand>
        <name>Ca(2+)</name>
        <dbReference type="ChEBI" id="CHEBI:29108"/>
        <label>1</label>
    </ligand>
</feature>
<feature type="binding site" evidence="2">
    <location>
        <position position="76"/>
    </location>
    <ligand>
        <name>Ca(2+)</name>
        <dbReference type="ChEBI" id="CHEBI:29108"/>
        <label>2</label>
    </ligand>
</feature>
<feature type="binding site" evidence="2">
    <location>
        <position position="78"/>
    </location>
    <ligand>
        <name>Ca(2+)</name>
        <dbReference type="ChEBI" id="CHEBI:29108"/>
        <label>2</label>
    </ligand>
</feature>
<feature type="binding site" evidence="2">
    <location>
        <position position="80"/>
    </location>
    <ligand>
        <name>Ca(2+)</name>
        <dbReference type="ChEBI" id="CHEBI:29108"/>
        <label>2</label>
    </ligand>
</feature>
<feature type="binding site" evidence="2">
    <location>
        <position position="82"/>
    </location>
    <ligand>
        <name>Ca(2+)</name>
        <dbReference type="ChEBI" id="CHEBI:29108"/>
        <label>2</label>
    </ligand>
</feature>
<feature type="binding site" evidence="2">
    <location>
        <position position="87"/>
    </location>
    <ligand>
        <name>Ca(2+)</name>
        <dbReference type="ChEBI" id="CHEBI:29108"/>
        <label>2</label>
    </ligand>
</feature>
<feature type="binding site" evidence="2">
    <location>
        <position position="120"/>
    </location>
    <ligand>
        <name>Ca(2+)</name>
        <dbReference type="ChEBI" id="CHEBI:29108"/>
        <label>3</label>
    </ligand>
</feature>
<feature type="binding site" evidence="2">
    <location>
        <position position="122"/>
    </location>
    <ligand>
        <name>Ca(2+)</name>
        <dbReference type="ChEBI" id="CHEBI:29108"/>
        <label>3</label>
    </ligand>
</feature>
<feature type="binding site" evidence="2">
    <location>
        <position position="124"/>
    </location>
    <ligand>
        <name>Ca(2+)</name>
        <dbReference type="ChEBI" id="CHEBI:29108"/>
        <label>3</label>
    </ligand>
</feature>
<feature type="binding site" evidence="2">
    <location>
        <position position="126"/>
    </location>
    <ligand>
        <name>Ca(2+)</name>
        <dbReference type="ChEBI" id="CHEBI:29108"/>
        <label>3</label>
    </ligand>
</feature>
<feature type="binding site" evidence="2">
    <location>
        <position position="131"/>
    </location>
    <ligand>
        <name>Ca(2+)</name>
        <dbReference type="ChEBI" id="CHEBI:29108"/>
        <label>3</label>
    </ligand>
</feature>
<feature type="binding site" evidence="2">
    <location>
        <position position="164"/>
    </location>
    <ligand>
        <name>Ca(2+)</name>
        <dbReference type="ChEBI" id="CHEBI:29108"/>
        <label>4</label>
    </ligand>
</feature>
<feature type="binding site" evidence="2">
    <location>
        <position position="166"/>
    </location>
    <ligand>
        <name>Ca(2+)</name>
        <dbReference type="ChEBI" id="CHEBI:29108"/>
        <label>4</label>
    </ligand>
</feature>
<feature type="binding site" evidence="2">
    <location>
        <position position="168"/>
    </location>
    <ligand>
        <name>Ca(2+)</name>
        <dbReference type="ChEBI" id="CHEBI:29108"/>
        <label>4</label>
    </ligand>
</feature>
<feature type="binding site" evidence="2">
    <location>
        <position position="170"/>
    </location>
    <ligand>
        <name>Ca(2+)</name>
        <dbReference type="ChEBI" id="CHEBI:29108"/>
        <label>4</label>
    </ligand>
</feature>
<feature type="binding site" evidence="2">
    <location>
        <position position="175"/>
    </location>
    <ligand>
        <name>Ca(2+)</name>
        <dbReference type="ChEBI" id="CHEBI:29108"/>
        <label>4</label>
    </ligand>
</feature>
<feature type="binding site" evidence="2">
    <location>
        <position position="208"/>
    </location>
    <ligand>
        <name>Ca(2+)</name>
        <dbReference type="ChEBI" id="CHEBI:29108"/>
        <label>5</label>
    </ligand>
</feature>
<feature type="binding site" evidence="2">
    <location>
        <position position="210"/>
    </location>
    <ligand>
        <name>Ca(2+)</name>
        <dbReference type="ChEBI" id="CHEBI:29108"/>
        <label>5</label>
    </ligand>
</feature>
<feature type="binding site" evidence="2">
    <location>
        <position position="212"/>
    </location>
    <ligand>
        <name>Ca(2+)</name>
        <dbReference type="ChEBI" id="CHEBI:29108"/>
        <label>5</label>
    </ligand>
</feature>
<feature type="binding site" evidence="2">
    <location>
        <position position="214"/>
    </location>
    <ligand>
        <name>Ca(2+)</name>
        <dbReference type="ChEBI" id="CHEBI:29108"/>
        <label>5</label>
    </ligand>
</feature>
<feature type="binding site" evidence="2">
    <location>
        <position position="219"/>
    </location>
    <ligand>
        <name>Ca(2+)</name>
        <dbReference type="ChEBI" id="CHEBI:29108"/>
        <label>5</label>
    </ligand>
</feature>
<feature type="modified residue" description="Phosphotyrosine" evidence="1">
    <location>
        <position position="214"/>
    </location>
</feature>